<name>GGTA1_BOVIN</name>
<reference key="1">
    <citation type="journal article" date="1989" name="J. Biol. Chem.">
        <title>Bovine alpha 1--&gt;3-galactosyltransferase: isolation and characterization of a cDNA clone. Identification of homologous sequences in human genomic DNA.</title>
        <authorList>
            <person name="Joziasse D.H."/>
            <person name="Shaper J.H."/>
            <person name="van den Eijnden D.H."/>
            <person name="van Tunen A.J."/>
            <person name="Shaper N.L."/>
        </authorList>
    </citation>
    <scope>NUCLEOTIDE SEQUENCE [MRNA]</scope>
</reference>
<reference key="2">
    <citation type="journal article" date="2001" name="EMBO J.">
        <title>Bovine alpha1,3-galactosyltransferase catalytic domain structure and its relationship with ABO histo-blood group and glycosphingolipid glycosyltransferases.</title>
        <authorList>
            <person name="Gastinel L.N."/>
            <person name="Bignon C."/>
            <person name="Misra A.K."/>
            <person name="Hindsgaul O."/>
            <person name="Shaper J.H."/>
            <person name="Joziasse D.H."/>
        </authorList>
    </citation>
    <scope>X-RAY CRYSTALLOGRAPHY (2.3 ANGSTROMS) OF 80-368 IN COMPLEX WITH MANGANESE AND SUBSTRATE ANALOGS</scope>
    <scope>METAL-BINDING</scope>
    <scope>ACTIVE SITE</scope>
</reference>
<reference key="3">
    <citation type="journal article" date="2001" name="J. Biol. Chem.">
        <title>Structure of UDP complex of UDP-galactose:beta-galactoside-alpha-1,3-galactosyltransferase at 1.53-A resolution reveals a conformational change in the catalytically important C-terminus.</title>
        <authorList>
            <person name="Boix E."/>
            <person name="Swaminathan G.J."/>
            <person name="Zhang Y."/>
            <person name="Natesh R."/>
            <person name="Brew K."/>
            <person name="Acharya K.R."/>
        </authorList>
    </citation>
    <scope>X-RAY CRYSTALLOGRAPHY (1.53 ANGSTROMS) OF 80-368 IN COMPLEX WITH MANGANESE AND UDP</scope>
    <scope>MUTAGENESIS OF ARG-365</scope>
    <scope>METAL-BINDING</scope>
    <scope>CATALYTIC ACTIVITY</scope>
</reference>
<reference evidence="9 10 11 12" key="4">
    <citation type="journal article" date="2002" name="J. Biol. Chem.">
        <title>Structural basis of ordered binding of donor and acceptor substrates to the retaining glycosyltransferase, alpha-1,3-galactosyltransferase.</title>
        <authorList>
            <person name="Boix E."/>
            <person name="Zhang Y."/>
            <person name="Swaminathan G.J."/>
            <person name="Brew K."/>
            <person name="Acharya K.R."/>
        </authorList>
    </citation>
    <scope>X-RAY CRYSTALLOGRAPHY (1.46 ANGSTROMS) OF 80-368 IN COMPLEX WITH MANGANESE; UDP AND SUBSTRATE ANALOGS</scope>
    <scope>METAL-BINDING</scope>
    <scope>CATALYTIC ACTIVITY</scope>
</reference>
<comment type="function">
    <text evidence="1">Synthesizes the galactose-alpha(1,3)-galactose group by catalyzing the transfer of a galactose residue, with an alpha-1,3 linkage, on terminal lactosaminide (Gal-beta-1,4-GlcNAc-R) disaccharide borne by a glycoprotein or a glycolipid. Preferentially glycosylates proteins, can synthesize galactose-alpha(1,3)-galactose on glycoproteins but cannot synthesize the glycolipid called isoglobotrihexosylceramide or isogloboside 3 (iGb3).</text>
</comment>
<comment type="catalytic activity">
    <reaction evidence="4 5">
        <text>a beta-D-galactosyl-(1-&gt;4)-N-acetyl-beta-D-glucosaminyl derivative + UDP-alpha-D-galactose = an alpha-D-galactosyl-(1-&gt;3)-beta-D-galactosyl-(1-&gt;4)-N-acetyl-beta-D-glucosaminyl derivative + UDP + H(+)</text>
        <dbReference type="Rhea" id="RHEA:13013"/>
        <dbReference type="ChEBI" id="CHEBI:15378"/>
        <dbReference type="ChEBI" id="CHEBI:58223"/>
        <dbReference type="ChEBI" id="CHEBI:66914"/>
        <dbReference type="ChEBI" id="CHEBI:133507"/>
        <dbReference type="ChEBI" id="CHEBI:138024"/>
        <dbReference type="EC" id="2.4.1.87"/>
    </reaction>
</comment>
<comment type="cofactor">
    <cofactor evidence="3 4 5">
        <name>Mn(2+)</name>
        <dbReference type="ChEBI" id="CHEBI:29035"/>
    </cofactor>
    <text evidence="3 4 5">Binds 1 Mn(2+) ion per subunit.</text>
</comment>
<comment type="pathway">
    <text evidence="6">Protein modification; protein glycosylation.</text>
</comment>
<comment type="subcellular location">
    <subcellularLocation>
        <location>Golgi apparatus</location>
        <location>Golgi stack membrane</location>
        <topology>Single-pass type II membrane protein</topology>
    </subcellularLocation>
    <text>Membrane-bound form in trans cisternae of Golgi.</text>
</comment>
<comment type="domain">
    <text>The conserved DXD motif is involved in cofactor binding. The manganese ion interacts with the beta-phosphate group of UDP and may also have a role in catalysis.</text>
</comment>
<comment type="similarity">
    <text evidence="6">Belongs to the glycosyltransferase 6 family.</text>
</comment>
<feature type="chain" id="PRO_0000157298" description="N-acetyllactosaminide alpha-1,3-galactosyltransferase">
    <location>
        <begin position="1"/>
        <end position="368"/>
    </location>
</feature>
<feature type="topological domain" description="Cytoplasmic" evidence="2">
    <location>
        <begin position="1"/>
        <end position="6"/>
    </location>
</feature>
<feature type="transmembrane region" description="Helical; Signal-anchor for type II membrane protein" evidence="2">
    <location>
        <begin position="7"/>
        <end position="22"/>
    </location>
</feature>
<feature type="topological domain" description="Lumenal" evidence="2">
    <location>
        <begin position="23"/>
        <end position="368"/>
    </location>
</feature>
<feature type="active site" description="Nucleophile" evidence="3 7">
    <location>
        <position position="317"/>
    </location>
</feature>
<feature type="binding site" evidence="3 4 5 8 9 10 11 12 13 14 15 16 17 18 19 20 21 22 23 24 25">
    <location>
        <begin position="134"/>
        <end position="139"/>
    </location>
    <ligand>
        <name>substrate</name>
    </ligand>
</feature>
<feature type="binding site" evidence="3 4 5 8 9 10 11 12 13 14 15 16 17 18 19 20 21 22 23 24 25">
    <location>
        <begin position="225"/>
        <end position="227"/>
    </location>
    <ligand>
        <name>substrate</name>
    </ligand>
</feature>
<feature type="binding site" evidence="3 4 5 7 8 9 10 11 12 13 14 15 16 17 18 19 20 21 22 23 24 25">
    <location>
        <position position="225"/>
    </location>
    <ligand>
        <name>Mn(2+)</name>
        <dbReference type="ChEBI" id="CHEBI:29035"/>
    </ligand>
</feature>
<feature type="binding site" evidence="3 4 5 7 8 9 10 11 12 13 14 15 16 17 18 19 20 21 22 23 24 25">
    <location>
        <position position="227"/>
    </location>
    <ligand>
        <name>Mn(2+)</name>
        <dbReference type="ChEBI" id="CHEBI:29035"/>
    </ligand>
</feature>
<feature type="binding site" evidence="5 9 12 14 15 18 22 25">
    <location>
        <begin position="247"/>
        <end position="250"/>
    </location>
    <ligand>
        <name>substrate</name>
    </ligand>
</feature>
<feature type="binding site" evidence="5 9 12 14 15 18 22 25">
    <location>
        <position position="259"/>
    </location>
    <ligand>
        <name>substrate</name>
    </ligand>
</feature>
<feature type="binding site" evidence="4 5 9 10 11 12 13 14 15 16 17 18 19 20 21 22 23 25">
    <location>
        <begin position="359"/>
        <end position="365"/>
    </location>
    <ligand>
        <name>substrate</name>
    </ligand>
</feature>
<feature type="glycosylation site" description="N-linked (GlcNAc...) asparagine" evidence="2">
    <location>
        <position position="293"/>
    </location>
</feature>
<feature type="mutagenesis site" description="Strongly reduces catalytic efficiency." evidence="4">
    <original>R</original>
    <variation>K</variation>
    <location>
        <position position="365"/>
    </location>
</feature>
<feature type="helix" evidence="28">
    <location>
        <begin position="85"/>
        <end position="88"/>
    </location>
</feature>
<feature type="helix" evidence="28">
    <location>
        <begin position="91"/>
        <end position="93"/>
    </location>
</feature>
<feature type="strand" evidence="26">
    <location>
        <begin position="95"/>
        <end position="97"/>
    </location>
</feature>
<feature type="strand" evidence="28">
    <location>
        <begin position="106"/>
        <end position="108"/>
    </location>
</feature>
<feature type="turn" evidence="27">
    <location>
        <begin position="110"/>
        <end position="112"/>
    </location>
</feature>
<feature type="helix" evidence="28">
    <location>
        <begin position="115"/>
        <end position="125"/>
    </location>
</feature>
<feature type="strand" evidence="28">
    <location>
        <begin position="129"/>
        <end position="135"/>
    </location>
</feature>
<feature type="helix" evidence="28">
    <location>
        <begin position="139"/>
        <end position="154"/>
    </location>
</feature>
<feature type="turn" evidence="29">
    <location>
        <begin position="156"/>
        <end position="158"/>
    </location>
</feature>
<feature type="strand" evidence="28">
    <location>
        <begin position="161"/>
        <end position="168"/>
    </location>
</feature>
<feature type="helix" evidence="28">
    <location>
        <begin position="170"/>
        <end position="172"/>
    </location>
</feature>
<feature type="strand" evidence="28">
    <location>
        <begin position="182"/>
        <end position="188"/>
    </location>
</feature>
<feature type="helix" evidence="28">
    <location>
        <begin position="195"/>
        <end position="212"/>
    </location>
</feature>
<feature type="helix" evidence="28">
    <location>
        <begin position="214"/>
        <end position="217"/>
    </location>
</feature>
<feature type="strand" evidence="28">
    <location>
        <begin position="219"/>
        <end position="224"/>
    </location>
</feature>
<feature type="strand" evidence="28">
    <location>
        <begin position="226"/>
        <end position="230"/>
    </location>
</feature>
<feature type="helix" evidence="28">
    <location>
        <begin position="236"/>
        <end position="238"/>
    </location>
</feature>
<feature type="strand" evidence="28">
    <location>
        <begin position="240"/>
        <end position="246"/>
    </location>
</feature>
<feature type="turn" evidence="28">
    <location>
        <begin position="248"/>
        <end position="252"/>
    </location>
</feature>
<feature type="helix" evidence="28">
    <location>
        <begin position="255"/>
        <end position="257"/>
    </location>
</feature>
<feature type="strand" evidence="28">
    <location>
        <begin position="279"/>
        <end position="286"/>
    </location>
</feature>
<feature type="helix" evidence="28">
    <location>
        <begin position="288"/>
        <end position="307"/>
    </location>
</feature>
<feature type="turn" evidence="28">
    <location>
        <begin position="313"/>
        <end position="315"/>
    </location>
</feature>
<feature type="helix" evidence="28">
    <location>
        <begin position="316"/>
        <end position="326"/>
    </location>
</feature>
<feature type="strand" evidence="28">
    <location>
        <begin position="330"/>
        <end position="333"/>
    </location>
</feature>
<feature type="helix" evidence="28">
    <location>
        <begin position="335"/>
        <end position="337"/>
    </location>
</feature>
<feature type="helix" evidence="28">
    <location>
        <begin position="341"/>
        <end position="343"/>
    </location>
</feature>
<feature type="strand" evidence="30">
    <location>
        <begin position="347"/>
        <end position="350"/>
    </location>
</feature>
<feature type="strand" evidence="28">
    <location>
        <begin position="353"/>
        <end position="356"/>
    </location>
</feature>
<feature type="helix" evidence="28">
    <location>
        <begin position="361"/>
        <end position="364"/>
    </location>
</feature>
<sequence length="368" mass="43247">MNVKGKVILSMLVVSTVIVVFWEYIHSPEGSLFWINPSRNPEVGGSSIQKGWWLPRWFNNGYHEEDGDINEEKEQRNEDESKLKLSDWFNPFKRPEVVTMTKWKAPVVWEGTYNRAVLDNYYAKQKITVGLTVFAVGRYIEHYLEEFLTSANKHFMVGHPVIFYIMVDDVSRMPLIELGPLRSFKVFKIKPEKRWQDISMMRMKTIGEHIVAHIQHEVDFLFCMDVDQVFQDKFGVETLGESVAQLQAWWYKADPNDFTYERRKESAAYIPFGEGDFYYHAAIFGGTPTQVLNITQECFKGILKDKKNDIEAQWHDESHLNKYFLLNKPTKILSPEYCWDYHIGLPADIKLVKMSWQTKEYNVVRNNV</sequence>
<protein>
    <recommendedName>
        <fullName>N-acetyllactosaminide alpha-1,3-galactosyltransferase</fullName>
        <ecNumber evidence="4 5">2.4.1.87</ecNumber>
    </recommendedName>
    <alternativeName>
        <fullName>UDP-galactose:beta-D-galactosyl-1,4-N-acetyl-D-glucosaminide alpha-1,3-galactosyltransferase</fullName>
        <shortName>Galactosyltransferase</shortName>
    </alternativeName>
</protein>
<organism>
    <name type="scientific">Bos taurus</name>
    <name type="common">Bovine</name>
    <dbReference type="NCBI Taxonomy" id="9913"/>
    <lineage>
        <taxon>Eukaryota</taxon>
        <taxon>Metazoa</taxon>
        <taxon>Chordata</taxon>
        <taxon>Craniata</taxon>
        <taxon>Vertebrata</taxon>
        <taxon>Euteleostomi</taxon>
        <taxon>Mammalia</taxon>
        <taxon>Eutheria</taxon>
        <taxon>Laurasiatheria</taxon>
        <taxon>Artiodactyla</taxon>
        <taxon>Ruminantia</taxon>
        <taxon>Pecora</taxon>
        <taxon>Bovidae</taxon>
        <taxon>Bovinae</taxon>
        <taxon>Bos</taxon>
    </lineage>
</organism>
<gene>
    <name type="primary">GGTA1</name>
</gene>
<proteinExistence type="evidence at protein level"/>
<evidence type="ECO:0000250" key="1">
    <source>
        <dbReference type="UniProtKB" id="P23336"/>
    </source>
</evidence>
<evidence type="ECO:0000255" key="2"/>
<evidence type="ECO:0000269" key="3">
    <source>
    </source>
</evidence>
<evidence type="ECO:0000269" key="4">
    <source>
    </source>
</evidence>
<evidence type="ECO:0000269" key="5">
    <source>
    </source>
</evidence>
<evidence type="ECO:0000305" key="6"/>
<evidence type="ECO:0007744" key="7">
    <source>
        <dbReference type="PDB" id="1G8O"/>
    </source>
</evidence>
<evidence type="ECO:0007744" key="8">
    <source>
        <dbReference type="PDB" id="1G93"/>
    </source>
</evidence>
<evidence type="ECO:0007744" key="9">
    <source>
        <dbReference type="PDB" id="1GWV"/>
    </source>
</evidence>
<evidence type="ECO:0007744" key="10">
    <source>
        <dbReference type="PDB" id="1GWW"/>
    </source>
</evidence>
<evidence type="ECO:0007744" key="11">
    <source>
        <dbReference type="PDB" id="1GX0"/>
    </source>
</evidence>
<evidence type="ECO:0007744" key="12">
    <source>
        <dbReference type="PDB" id="1GX4"/>
    </source>
</evidence>
<evidence type="ECO:0007744" key="13">
    <source>
        <dbReference type="PDB" id="1K4V"/>
    </source>
</evidence>
<evidence type="ECO:0007744" key="14">
    <source>
        <dbReference type="PDB" id="1O7O"/>
    </source>
</evidence>
<evidence type="ECO:0007744" key="15">
    <source>
        <dbReference type="PDB" id="1O7Q"/>
    </source>
</evidence>
<evidence type="ECO:0007744" key="16">
    <source>
        <dbReference type="PDB" id="1VZT"/>
    </source>
</evidence>
<evidence type="ECO:0007744" key="17">
    <source>
        <dbReference type="PDB" id="1VZU"/>
    </source>
</evidence>
<evidence type="ECO:0007744" key="18">
    <source>
        <dbReference type="PDB" id="1VZX"/>
    </source>
</evidence>
<evidence type="ECO:0007744" key="19">
    <source>
        <dbReference type="PDB" id="2JCK"/>
    </source>
</evidence>
<evidence type="ECO:0007744" key="20">
    <source>
        <dbReference type="PDB" id="2VFZ"/>
    </source>
</evidence>
<evidence type="ECO:0007744" key="21">
    <source>
        <dbReference type="PDB" id="2VS3"/>
    </source>
</evidence>
<evidence type="ECO:0007744" key="22">
    <source>
        <dbReference type="PDB" id="2VS4"/>
    </source>
</evidence>
<evidence type="ECO:0007744" key="23">
    <source>
        <dbReference type="PDB" id="2VS5"/>
    </source>
</evidence>
<evidence type="ECO:0007744" key="24">
    <source>
        <dbReference type="PDB" id="2VXL"/>
    </source>
</evidence>
<evidence type="ECO:0007744" key="25">
    <source>
        <dbReference type="PDB" id="2WGZ"/>
    </source>
</evidence>
<evidence type="ECO:0007829" key="26">
    <source>
        <dbReference type="PDB" id="1G93"/>
    </source>
</evidence>
<evidence type="ECO:0007829" key="27">
    <source>
        <dbReference type="PDB" id="1GWW"/>
    </source>
</evidence>
<evidence type="ECO:0007829" key="28">
    <source>
        <dbReference type="PDB" id="1O7Q"/>
    </source>
</evidence>
<evidence type="ECO:0007829" key="29">
    <source>
        <dbReference type="PDB" id="2JCK"/>
    </source>
</evidence>
<evidence type="ECO:0007829" key="30">
    <source>
        <dbReference type="PDB" id="2VXM"/>
    </source>
</evidence>
<dbReference type="EC" id="2.4.1.87" evidence="4 5"/>
<dbReference type="EMBL" id="J04989">
    <property type="protein sequence ID" value="AAA30558.1"/>
    <property type="molecule type" value="mRNA"/>
</dbReference>
<dbReference type="PIR" id="A44785">
    <property type="entry name" value="A44785"/>
</dbReference>
<dbReference type="RefSeq" id="NP_803477.1">
    <property type="nucleotide sequence ID" value="NM_177511.2"/>
</dbReference>
<dbReference type="RefSeq" id="XP_005212979.2">
    <property type="nucleotide sequence ID" value="XM_005212922.5"/>
</dbReference>
<dbReference type="RefSeq" id="XP_005212980.1">
    <property type="nucleotide sequence ID" value="XM_005212923.5"/>
</dbReference>
<dbReference type="RefSeq" id="XP_005212981.1">
    <property type="nucleotide sequence ID" value="XM_005212924.5"/>
</dbReference>
<dbReference type="RefSeq" id="XP_024854045.1">
    <property type="nucleotide sequence ID" value="XM_024998277.2"/>
</dbReference>
<dbReference type="PDB" id="1FG5">
    <property type="method" value="X-ray"/>
    <property type="resolution" value="2.80 A"/>
    <property type="chains" value="N=80-368"/>
</dbReference>
<dbReference type="PDB" id="1G8O">
    <property type="method" value="X-ray"/>
    <property type="resolution" value="2.30 A"/>
    <property type="chains" value="A=80-368"/>
</dbReference>
<dbReference type="PDB" id="1G93">
    <property type="method" value="X-ray"/>
    <property type="resolution" value="2.50 A"/>
    <property type="chains" value="A=80-368"/>
</dbReference>
<dbReference type="PDB" id="1GWV">
    <property type="method" value="X-ray"/>
    <property type="resolution" value="2.50 A"/>
    <property type="chains" value="A/B=80-368"/>
</dbReference>
<dbReference type="PDB" id="1GWW">
    <property type="method" value="X-ray"/>
    <property type="resolution" value="1.80 A"/>
    <property type="chains" value="A/B=80-368"/>
</dbReference>
<dbReference type="PDB" id="1GX0">
    <property type="method" value="X-ray"/>
    <property type="resolution" value="1.80 A"/>
    <property type="chains" value="A/B=80-368"/>
</dbReference>
<dbReference type="PDB" id="1GX4">
    <property type="method" value="X-ray"/>
    <property type="resolution" value="1.46 A"/>
    <property type="chains" value="A/B=80-368"/>
</dbReference>
<dbReference type="PDB" id="1K4V">
    <property type="method" value="X-ray"/>
    <property type="resolution" value="1.53 A"/>
    <property type="chains" value="A/B=80-368"/>
</dbReference>
<dbReference type="PDB" id="1O7O">
    <property type="method" value="X-ray"/>
    <property type="resolution" value="1.97 A"/>
    <property type="chains" value="A/B=80-368"/>
</dbReference>
<dbReference type="PDB" id="1O7Q">
    <property type="method" value="X-ray"/>
    <property type="resolution" value="1.30 A"/>
    <property type="chains" value="A/B=80-368"/>
</dbReference>
<dbReference type="PDB" id="1VZT">
    <property type="method" value="X-ray"/>
    <property type="resolution" value="2.00 A"/>
    <property type="chains" value="A/B=80-368"/>
</dbReference>
<dbReference type="PDB" id="1VZU">
    <property type="method" value="X-ray"/>
    <property type="resolution" value="1.97 A"/>
    <property type="chains" value="A/B=80-368"/>
</dbReference>
<dbReference type="PDB" id="1VZX">
    <property type="method" value="X-ray"/>
    <property type="resolution" value="1.97 A"/>
    <property type="chains" value="A/B=80-368"/>
</dbReference>
<dbReference type="PDB" id="2JCJ">
    <property type="method" value="X-ray"/>
    <property type="resolution" value="2.01 A"/>
    <property type="chains" value="A=80-365"/>
</dbReference>
<dbReference type="PDB" id="2JCK">
    <property type="method" value="X-ray"/>
    <property type="resolution" value="1.80 A"/>
    <property type="chains" value="A=80-368"/>
</dbReference>
<dbReference type="PDB" id="2JCL">
    <property type="method" value="X-ray"/>
    <property type="resolution" value="3.29 A"/>
    <property type="chains" value="A/B=80-368"/>
</dbReference>
<dbReference type="PDB" id="2JCO">
    <property type="method" value="X-ray"/>
    <property type="resolution" value="2.57 A"/>
    <property type="chains" value="A=80-368"/>
</dbReference>
<dbReference type="PDB" id="2VFZ">
    <property type="method" value="X-ray"/>
    <property type="resolution" value="2.40 A"/>
    <property type="chains" value="A/B=80-368"/>
</dbReference>
<dbReference type="PDB" id="2VS3">
    <property type="method" value="X-ray"/>
    <property type="resolution" value="2.20 A"/>
    <property type="chains" value="A/B=80-368"/>
</dbReference>
<dbReference type="PDB" id="2VS4">
    <property type="method" value="X-ray"/>
    <property type="resolution" value="1.77 A"/>
    <property type="chains" value="A/B=80-368"/>
</dbReference>
<dbReference type="PDB" id="2VS5">
    <property type="method" value="X-ray"/>
    <property type="resolution" value="1.82 A"/>
    <property type="chains" value="A/B=80-365"/>
</dbReference>
<dbReference type="PDB" id="2VXL">
    <property type="method" value="X-ray"/>
    <property type="resolution" value="2.70 A"/>
    <property type="chains" value="A=82-358"/>
</dbReference>
<dbReference type="PDB" id="2VXM">
    <property type="method" value="X-ray"/>
    <property type="resolution" value="2.82 A"/>
    <property type="chains" value="A/B/C/D=82-354"/>
</dbReference>
<dbReference type="PDB" id="2WGZ">
    <property type="method" value="X-ray"/>
    <property type="resolution" value="2.12 A"/>
    <property type="chains" value="A/B=80-368"/>
</dbReference>
<dbReference type="PDB" id="5NR9">
    <property type="method" value="X-ray"/>
    <property type="resolution" value="1.70 A"/>
    <property type="chains" value="A/B=80-368"/>
</dbReference>
<dbReference type="PDB" id="5NRB">
    <property type="method" value="X-ray"/>
    <property type="resolution" value="2.24 A"/>
    <property type="chains" value="A/B=80-368"/>
</dbReference>
<dbReference type="PDB" id="5NRD">
    <property type="method" value="X-ray"/>
    <property type="resolution" value="2.12 A"/>
    <property type="chains" value="A/B=80-368"/>
</dbReference>
<dbReference type="PDB" id="5NRE">
    <property type="method" value="X-ray"/>
    <property type="resolution" value="1.98 A"/>
    <property type="chains" value="A/B=80-368"/>
</dbReference>
<dbReference type="PDBsum" id="1FG5"/>
<dbReference type="PDBsum" id="1G8O"/>
<dbReference type="PDBsum" id="1G93"/>
<dbReference type="PDBsum" id="1GWV"/>
<dbReference type="PDBsum" id="1GWW"/>
<dbReference type="PDBsum" id="1GX0"/>
<dbReference type="PDBsum" id="1GX4"/>
<dbReference type="PDBsum" id="1K4V"/>
<dbReference type="PDBsum" id="1O7O"/>
<dbReference type="PDBsum" id="1O7Q"/>
<dbReference type="PDBsum" id="1VZT"/>
<dbReference type="PDBsum" id="1VZU"/>
<dbReference type="PDBsum" id="1VZX"/>
<dbReference type="PDBsum" id="2JCJ"/>
<dbReference type="PDBsum" id="2JCK"/>
<dbReference type="PDBsum" id="2JCL"/>
<dbReference type="PDBsum" id="2JCO"/>
<dbReference type="PDBsum" id="2VFZ"/>
<dbReference type="PDBsum" id="2VS3"/>
<dbReference type="PDBsum" id="2VS4"/>
<dbReference type="PDBsum" id="2VS5"/>
<dbReference type="PDBsum" id="2VXL"/>
<dbReference type="PDBsum" id="2VXM"/>
<dbReference type="PDBsum" id="2WGZ"/>
<dbReference type="PDBsum" id="5NR9"/>
<dbReference type="PDBsum" id="5NRB"/>
<dbReference type="PDBsum" id="5NRD"/>
<dbReference type="PDBsum" id="5NRE"/>
<dbReference type="SMR" id="P14769"/>
<dbReference type="FunCoup" id="P14769">
    <property type="interactions" value="225"/>
</dbReference>
<dbReference type="STRING" id="9913.ENSBTAP00000065603"/>
<dbReference type="BindingDB" id="P14769"/>
<dbReference type="ChEMBL" id="CHEMBL2069158"/>
<dbReference type="CAZy" id="GT6">
    <property type="family name" value="Glycosyltransferase Family 6"/>
</dbReference>
<dbReference type="GlyCosmos" id="P14769">
    <property type="glycosylation" value="1 site, No reported glycans"/>
</dbReference>
<dbReference type="GlyGen" id="P14769">
    <property type="glycosylation" value="1 site"/>
</dbReference>
<dbReference type="PaxDb" id="9913-ENSBTAP00000016033"/>
<dbReference type="Ensembl" id="ENSBTAT00000016033.3">
    <property type="protein sequence ID" value="ENSBTAP00000016033.2"/>
    <property type="gene ID" value="ENSBTAG00000012090.6"/>
</dbReference>
<dbReference type="GeneID" id="281780"/>
<dbReference type="KEGG" id="bta:281780"/>
<dbReference type="CTD" id="2681"/>
<dbReference type="VEuPathDB" id="HostDB:ENSBTAG00000012090"/>
<dbReference type="eggNOG" id="ENOG502QW2H">
    <property type="taxonomic scope" value="Eukaryota"/>
</dbReference>
<dbReference type="GeneTree" id="ENSGT00950000182858"/>
<dbReference type="HOGENOM" id="CLU_062445_1_0_1"/>
<dbReference type="InParanoid" id="P14769"/>
<dbReference type="OMA" id="WWHKERR"/>
<dbReference type="OrthoDB" id="10013941at2759"/>
<dbReference type="TreeFam" id="TF330991"/>
<dbReference type="BRENDA" id="2.4.1.87">
    <property type="organism ID" value="908"/>
</dbReference>
<dbReference type="UniPathway" id="UPA00378"/>
<dbReference type="EvolutionaryTrace" id="P14769"/>
<dbReference type="PRO" id="PR:P14769"/>
<dbReference type="Proteomes" id="UP000009136">
    <property type="component" value="Chromosome 11"/>
</dbReference>
<dbReference type="Bgee" id="ENSBTAG00000012090">
    <property type="expression patterns" value="Expressed in thymus and 107 other cell types or tissues"/>
</dbReference>
<dbReference type="GO" id="GO:0005794">
    <property type="term" value="C:Golgi apparatus"/>
    <property type="evidence" value="ECO:0000318"/>
    <property type="project" value="GO_Central"/>
</dbReference>
<dbReference type="GO" id="GO:0031985">
    <property type="term" value="C:Golgi cisterna"/>
    <property type="evidence" value="ECO:0000250"/>
    <property type="project" value="UniProtKB"/>
</dbReference>
<dbReference type="GO" id="GO:0032580">
    <property type="term" value="C:Golgi cisterna membrane"/>
    <property type="evidence" value="ECO:0007669"/>
    <property type="project" value="UniProtKB-SubCell"/>
</dbReference>
<dbReference type="GO" id="GO:0031982">
    <property type="term" value="C:vesicle"/>
    <property type="evidence" value="ECO:0000318"/>
    <property type="project" value="GO_Central"/>
</dbReference>
<dbReference type="GO" id="GO:0016757">
    <property type="term" value="F:glycosyltransferase activity"/>
    <property type="evidence" value="ECO:0000318"/>
    <property type="project" value="GO_Central"/>
</dbReference>
<dbReference type="GO" id="GO:0046872">
    <property type="term" value="F:metal ion binding"/>
    <property type="evidence" value="ECO:0007669"/>
    <property type="project" value="UniProtKB-KW"/>
</dbReference>
<dbReference type="GO" id="GO:0047276">
    <property type="term" value="F:N-acetyllactosaminide 3-alpha-galactosyltransferase activity"/>
    <property type="evidence" value="ECO:0007669"/>
    <property type="project" value="UniProtKB-EC"/>
</dbReference>
<dbReference type="GO" id="GO:0005975">
    <property type="term" value="P:carbohydrate metabolic process"/>
    <property type="evidence" value="ECO:0007669"/>
    <property type="project" value="InterPro"/>
</dbReference>
<dbReference type="GO" id="GO:0030259">
    <property type="term" value="P:lipid glycosylation"/>
    <property type="evidence" value="ECO:0000318"/>
    <property type="project" value="GO_Central"/>
</dbReference>
<dbReference type="GO" id="GO:0006486">
    <property type="term" value="P:protein glycosylation"/>
    <property type="evidence" value="ECO:0007669"/>
    <property type="project" value="UniProtKB-UniPathway"/>
</dbReference>
<dbReference type="CDD" id="cd02515">
    <property type="entry name" value="Glyco_transf_6"/>
    <property type="match status" value="1"/>
</dbReference>
<dbReference type="FunFam" id="3.90.550.10:FF:000022">
    <property type="entry name" value="Histo-blood group ABO system transferase"/>
    <property type="match status" value="1"/>
</dbReference>
<dbReference type="Gene3D" id="3.90.550.10">
    <property type="entry name" value="Spore Coat Polysaccharide Biosynthesis Protein SpsA, Chain A"/>
    <property type="match status" value="1"/>
</dbReference>
<dbReference type="InterPro" id="IPR005076">
    <property type="entry name" value="Glyco_trans_6"/>
</dbReference>
<dbReference type="InterPro" id="IPR029044">
    <property type="entry name" value="Nucleotide-diphossugar_trans"/>
</dbReference>
<dbReference type="PANTHER" id="PTHR10462">
    <property type="entry name" value="GLYCOSYLTRANSFERASE-RELATED"/>
    <property type="match status" value="1"/>
</dbReference>
<dbReference type="PANTHER" id="PTHR10462:SF26">
    <property type="entry name" value="N-ACETYLLACTOSAMINIDE ALPHA-1,3-GALACTOSYLTRANSFERASE"/>
    <property type="match status" value="1"/>
</dbReference>
<dbReference type="Pfam" id="PF03414">
    <property type="entry name" value="Glyco_transf_6"/>
    <property type="match status" value="1"/>
</dbReference>
<dbReference type="SUPFAM" id="SSF53448">
    <property type="entry name" value="Nucleotide-diphospho-sugar transferases"/>
    <property type="match status" value="1"/>
</dbReference>
<keyword id="KW-0002">3D-structure</keyword>
<keyword id="KW-0325">Glycoprotein</keyword>
<keyword id="KW-0328">Glycosyltransferase</keyword>
<keyword id="KW-0333">Golgi apparatus</keyword>
<keyword id="KW-0464">Manganese</keyword>
<keyword id="KW-0472">Membrane</keyword>
<keyword id="KW-0479">Metal-binding</keyword>
<keyword id="KW-1185">Reference proteome</keyword>
<keyword id="KW-0735">Signal-anchor</keyword>
<keyword id="KW-0808">Transferase</keyword>
<keyword id="KW-0812">Transmembrane</keyword>
<keyword id="KW-1133">Transmembrane helix</keyword>
<accession>P14769</accession>